<sequence>MNASGRSHSKGPIIRSVSLEDLKRNSSFKGNLKYKDEVTSHKEPQVGTLSNEELLKDLDNMLRGKLNMGRNSFHADKRNKSDGNISALTFKARSGLEGDIRTIDIQQDSSDENDNFKFSDDGVNKDRNNEKDNNTDNAVEFQDDAEEAEEENEDESFANVDELDGFDLNKVSDGKHVPINEKGEVDYNMPVDKEFQKSLDQCAASLEERSSAPYALQRAVDWELKMFYSLEDELSEWFCSSDYMHFGQTQTLFKQKITQPQLFFDDENYAASVVECLIEDIPNSLASNLLALSYISMGCFAFTNSKSEHTKIIRRNNLMLVPHIQEIVHAFKKIAISCRDDNRNLKKQTILLFHSSTILYFICSICIEGRGENPEAVNVVIDAFEKTDLLEFLTKYIENWRWNSRLAMRIRNMISLLFKLIVLQFGDSSVYKQTKSSIYNLHGLTYPSKHPEKLSISPLHYQAFREDITSRFPDYNMPSSGLPKDVDKSESLSQFLEIPRPKSKNPLNMALIVPEKHIATPAPSPPSSPQLMHLGEGPRPRKSFQTNMAYPCLYPSDNEGSEDDTLEDRIDLNIERKPDNDIVIPFSTEEAARILSESLEIKLSTKQLWYERDLFMITERGWKQQLENEPYDYAALNHDANSSKEEKSAICIMQRIDKYYKSCLSSFNSLVFVLLQTMESSLTNNFHRKSEVSDKNLLNMLTPQLEIVRAKELSLKSAAGILHALLKWFKLSHILKFEHLAVVIHDSRYINTCASILSKYSEVYPERVFNKYVQTPNSFWKECSLSNESYRESYSVDDSGEVDTEIMPSFAYLLRILRKVTGNKTQRLKELPLSIGILFKRYYRLFNLDMYHPILKITRELTPFKNKRWKSEHMELISGVYLYEKLELTDNWVTGKDISGELSDACGQEIALRALLQFYNFQHYEISMEDLGYGHRNSSSQDLLNKESEYLNI</sequence>
<accession>P53917</accession>
<accession>D6W156</accession>
<dbReference type="EMBL" id="Z46843">
    <property type="protein sequence ID" value="CAA86898.1"/>
    <property type="molecule type" value="Genomic_DNA"/>
</dbReference>
<dbReference type="EMBL" id="Z71402">
    <property type="protein sequence ID" value="CAA96008.1"/>
    <property type="molecule type" value="Genomic_DNA"/>
</dbReference>
<dbReference type="EMBL" id="Z71403">
    <property type="protein sequence ID" value="CAA96009.1"/>
    <property type="molecule type" value="Genomic_DNA"/>
</dbReference>
<dbReference type="EMBL" id="Z69382">
    <property type="protein sequence ID" value="CAA93376.1"/>
    <property type="molecule type" value="Genomic_DNA"/>
</dbReference>
<dbReference type="EMBL" id="BK006947">
    <property type="protein sequence ID" value="DAA10422.1"/>
    <property type="molecule type" value="Genomic_DNA"/>
</dbReference>
<dbReference type="PIR" id="S55156">
    <property type="entry name" value="S55156"/>
</dbReference>
<dbReference type="RefSeq" id="NP_014272.3">
    <property type="nucleotide sequence ID" value="NM_001182965.3"/>
</dbReference>
<dbReference type="BioGRID" id="35700">
    <property type="interactions" value="267"/>
</dbReference>
<dbReference type="ComplexPortal" id="CPX-1197">
    <property type="entry name" value="FAR complex"/>
</dbReference>
<dbReference type="DIP" id="DIP-1830N"/>
<dbReference type="FunCoup" id="P53917">
    <property type="interactions" value="53"/>
</dbReference>
<dbReference type="IntAct" id="P53917">
    <property type="interactions" value="27"/>
</dbReference>
<dbReference type="MINT" id="P53917"/>
<dbReference type="STRING" id="4932.YNL127W"/>
<dbReference type="iPTMnet" id="P53917"/>
<dbReference type="PaxDb" id="4932-YNL127W"/>
<dbReference type="PeptideAtlas" id="P53917"/>
<dbReference type="EnsemblFungi" id="YNL127W_mRNA">
    <property type="protein sequence ID" value="YNL127W"/>
    <property type="gene ID" value="YNL127W"/>
</dbReference>
<dbReference type="GeneID" id="855596"/>
<dbReference type="KEGG" id="sce:YNL127W"/>
<dbReference type="AGR" id="SGD:S000005071"/>
<dbReference type="SGD" id="S000005071">
    <property type="gene designation" value="FAR11"/>
</dbReference>
<dbReference type="VEuPathDB" id="FungiDB:YNL127W"/>
<dbReference type="eggNOG" id="KOG3680">
    <property type="taxonomic scope" value="Eukaryota"/>
</dbReference>
<dbReference type="GeneTree" id="ENSGT00400000022095"/>
<dbReference type="HOGENOM" id="CLU_003184_1_0_1"/>
<dbReference type="InParanoid" id="P53917"/>
<dbReference type="OMA" id="PCLYPSD"/>
<dbReference type="OrthoDB" id="18234at2759"/>
<dbReference type="BioCyc" id="YEAST:G3O-33148-MONOMER"/>
<dbReference type="BioGRID-ORCS" id="855596">
    <property type="hits" value="0 hits in 10 CRISPR screens"/>
</dbReference>
<dbReference type="PRO" id="PR:P53917"/>
<dbReference type="Proteomes" id="UP000002311">
    <property type="component" value="Chromosome XIV"/>
</dbReference>
<dbReference type="RNAct" id="P53917">
    <property type="molecule type" value="protein"/>
</dbReference>
<dbReference type="GO" id="GO:0005829">
    <property type="term" value="C:cytosol"/>
    <property type="evidence" value="ECO:0007005"/>
    <property type="project" value="SGD"/>
</dbReference>
<dbReference type="GO" id="GO:0005783">
    <property type="term" value="C:endoplasmic reticulum"/>
    <property type="evidence" value="ECO:0000314"/>
    <property type="project" value="SGD"/>
</dbReference>
<dbReference type="GO" id="GO:0005789">
    <property type="term" value="C:endoplasmic reticulum membrane"/>
    <property type="evidence" value="ECO:0000303"/>
    <property type="project" value="ComplexPortal"/>
</dbReference>
<dbReference type="GO" id="GO:0090443">
    <property type="term" value="C:FAR/SIN/STRIPAK complex"/>
    <property type="evidence" value="ECO:0000303"/>
    <property type="project" value="ComplexPortal"/>
</dbReference>
<dbReference type="GO" id="GO:0000138">
    <property type="term" value="C:Golgi trans cisterna"/>
    <property type="evidence" value="ECO:0000314"/>
    <property type="project" value="SGD"/>
</dbReference>
<dbReference type="GO" id="GO:0071444">
    <property type="term" value="P:cellular response to pheromone"/>
    <property type="evidence" value="ECO:0000303"/>
    <property type="project" value="ComplexPortal"/>
</dbReference>
<dbReference type="GO" id="GO:0007010">
    <property type="term" value="P:cytoskeleton organization"/>
    <property type="evidence" value="ECO:0000318"/>
    <property type="project" value="GO_Central"/>
</dbReference>
<dbReference type="GO" id="GO:0031573">
    <property type="term" value="P:mitotic intra-S DNA damage checkpoint signaling"/>
    <property type="evidence" value="ECO:0000315"/>
    <property type="project" value="SGD"/>
</dbReference>
<dbReference type="GO" id="GO:0016239">
    <property type="term" value="P:positive regulation of macroautophagy"/>
    <property type="evidence" value="ECO:0000315"/>
    <property type="project" value="SGD"/>
</dbReference>
<dbReference type="GO" id="GO:0000321">
    <property type="term" value="P:re-entry into mitotic cell cycle after pheromone arrest"/>
    <property type="evidence" value="ECO:0000316"/>
    <property type="project" value="SGD"/>
</dbReference>
<dbReference type="GO" id="GO:0051726">
    <property type="term" value="P:regulation of cell cycle"/>
    <property type="evidence" value="ECO:0000303"/>
    <property type="project" value="ComplexPortal"/>
</dbReference>
<dbReference type="InterPro" id="IPR040185">
    <property type="entry name" value="Far11/STRP"/>
</dbReference>
<dbReference type="InterPro" id="IPR021819">
    <property type="entry name" value="Far11/STRP_C"/>
</dbReference>
<dbReference type="InterPro" id="IPR012486">
    <property type="entry name" value="Far11/STRP_N"/>
</dbReference>
<dbReference type="PANTHER" id="PTHR13239:SF4">
    <property type="entry name" value="AT25231P"/>
    <property type="match status" value="1"/>
</dbReference>
<dbReference type="PANTHER" id="PTHR13239">
    <property type="entry name" value="PROTEIN REQUIRED FOR HYPHAL ANASTOMOSIS HAM-2"/>
    <property type="match status" value="1"/>
</dbReference>
<dbReference type="Pfam" id="PF11882">
    <property type="entry name" value="DUF3402"/>
    <property type="match status" value="2"/>
</dbReference>
<dbReference type="Pfam" id="PF07923">
    <property type="entry name" value="N1221"/>
    <property type="match status" value="1"/>
</dbReference>
<dbReference type="SMART" id="SM01293">
    <property type="entry name" value="DUF3402"/>
    <property type="match status" value="1"/>
</dbReference>
<dbReference type="SMART" id="SM01292">
    <property type="entry name" value="N1221"/>
    <property type="match status" value="1"/>
</dbReference>
<evidence type="ECO:0000256" key="1">
    <source>
        <dbReference type="SAM" id="MobiDB-lite"/>
    </source>
</evidence>
<evidence type="ECO:0000269" key="2">
    <source>
    </source>
</evidence>
<evidence type="ECO:0000269" key="3">
    <source>
    </source>
</evidence>
<evidence type="ECO:0000269" key="4">
    <source>
    </source>
</evidence>
<evidence type="ECO:0000305" key="5"/>
<evidence type="ECO:0007744" key="6">
    <source>
    </source>
</evidence>
<evidence type="ECO:0007744" key="7">
    <source>
    </source>
</evidence>
<evidence type="ECO:0007744" key="8">
    <source>
    </source>
</evidence>
<evidence type="ECO:0007744" key="9">
    <source>
    </source>
</evidence>
<keyword id="KW-0131">Cell cycle</keyword>
<keyword id="KW-0597">Phosphoprotein</keyword>
<keyword id="KW-1185">Reference proteome</keyword>
<feature type="chain" id="PRO_0000087190" description="Factor arrest protein 11">
    <location>
        <begin position="1"/>
        <end position="953"/>
    </location>
</feature>
<feature type="region of interest" description="Disordered" evidence="1">
    <location>
        <begin position="104"/>
        <end position="160"/>
    </location>
</feature>
<feature type="compositionally biased region" description="Basic and acidic residues" evidence="1">
    <location>
        <begin position="114"/>
        <end position="134"/>
    </location>
</feature>
<feature type="compositionally biased region" description="Acidic residues" evidence="1">
    <location>
        <begin position="141"/>
        <end position="160"/>
    </location>
</feature>
<feature type="modified residue" description="Phosphoserine" evidence="6">
    <location>
        <position position="18"/>
    </location>
</feature>
<feature type="modified residue" description="Phosphoserine" evidence="7 8 9">
    <location>
        <position position="81"/>
    </location>
</feature>
<feature type="modified residue" description="Phosphoserine" evidence="7">
    <location>
        <position position="524"/>
    </location>
</feature>
<feature type="modified residue" description="Phosphoserine" evidence="9">
    <location>
        <position position="527"/>
    </location>
</feature>
<feature type="modified residue" description="Phosphoserine" evidence="9">
    <location>
        <position position="528"/>
    </location>
</feature>
<comment type="function">
    <text evidence="2 4">Participates in the control of the reentry into the cell cycle following pheromone treatment.</text>
</comment>
<comment type="subunit">
    <text>Component of a complex at least composed of FAR3, FAR7, FAR8, FAR10, FAR11 and VPS64.</text>
</comment>
<comment type="interaction">
    <interactant intactId="EBI-28900">
        <id>P53917</id>
    </interactant>
    <interactant intactId="EBI-6789">
        <id>P46671</id>
        <label>FAR3</label>
    </interactant>
    <organismsDiffer>false</organismsDiffer>
    <experiments>3</experiments>
</comment>
<comment type="interaction">
    <interactant intactId="EBI-28900">
        <id>P53917</id>
    </interactant>
    <interactant intactId="EBI-1936">
        <id>P31383</id>
        <label>TPD3</label>
    </interactant>
    <organismsDiffer>false</organismsDiffer>
    <experiments>3</experiments>
</comment>
<comment type="miscellaneous">
    <text evidence="3">Present with 1080 molecules/cell in log phase SD medium.</text>
</comment>
<comment type="similarity">
    <text evidence="5">Belongs to the FAR11 family.</text>
</comment>
<organism>
    <name type="scientific">Saccharomyces cerevisiae (strain ATCC 204508 / S288c)</name>
    <name type="common">Baker's yeast</name>
    <dbReference type="NCBI Taxonomy" id="559292"/>
    <lineage>
        <taxon>Eukaryota</taxon>
        <taxon>Fungi</taxon>
        <taxon>Dikarya</taxon>
        <taxon>Ascomycota</taxon>
        <taxon>Saccharomycotina</taxon>
        <taxon>Saccharomycetes</taxon>
        <taxon>Saccharomycetales</taxon>
        <taxon>Saccharomycetaceae</taxon>
        <taxon>Saccharomyces</taxon>
    </lineage>
</organism>
<protein>
    <recommendedName>
        <fullName>Factor arrest protein 11</fullName>
    </recommendedName>
</protein>
<reference key="1">
    <citation type="journal article" date="1995" name="Yeast">
        <title>A 43.5 kb segment of yeast chromosome XIV, which contains MFA2, MEP2, CAP/SRV2, NAM9, FKB1/FPR1/RBP1, MOM22 and CPT1, predicts an adenosine deaminase gene and 14 new open reading frames.</title>
        <authorList>
            <person name="Mallet L."/>
            <person name="Bussereau F."/>
            <person name="Jacquet M."/>
        </authorList>
    </citation>
    <scope>NUCLEOTIDE SEQUENCE [GENOMIC DNA]</scope>
    <source>
        <strain>ATCC 204508 / S288c</strain>
    </source>
</reference>
<reference key="2">
    <citation type="journal article" date="1997" name="Nature">
        <title>The nucleotide sequence of Saccharomyces cerevisiae chromosome XIV and its evolutionary implications.</title>
        <authorList>
            <person name="Philippsen P."/>
            <person name="Kleine K."/>
            <person name="Poehlmann R."/>
            <person name="Duesterhoeft A."/>
            <person name="Hamberg K."/>
            <person name="Hegemann J.H."/>
            <person name="Obermaier B."/>
            <person name="Urrestarazu L.A."/>
            <person name="Aert R."/>
            <person name="Albermann K."/>
            <person name="Altmann R."/>
            <person name="Andre B."/>
            <person name="Baladron V."/>
            <person name="Ballesta J.P.G."/>
            <person name="Becam A.-M."/>
            <person name="Beinhauer J.D."/>
            <person name="Boskovic J."/>
            <person name="Buitrago M.J."/>
            <person name="Bussereau F."/>
            <person name="Coster F."/>
            <person name="Crouzet M."/>
            <person name="D'Angelo M."/>
            <person name="Dal Pero F."/>
            <person name="De Antoni A."/>
            <person name="del Rey F."/>
            <person name="Doignon F."/>
            <person name="Domdey H."/>
            <person name="Dubois E."/>
            <person name="Fiedler T.A."/>
            <person name="Fleig U."/>
            <person name="Floeth M."/>
            <person name="Fritz C."/>
            <person name="Gaillardin C."/>
            <person name="Garcia-Cantalejo J.M."/>
            <person name="Glansdorff N."/>
            <person name="Goffeau A."/>
            <person name="Gueldener U."/>
            <person name="Herbert C.J."/>
            <person name="Heumann K."/>
            <person name="Heuss-Neitzel D."/>
            <person name="Hilbert H."/>
            <person name="Hinni K."/>
            <person name="Iraqui Houssaini I."/>
            <person name="Jacquet M."/>
            <person name="Jimenez A."/>
            <person name="Jonniaux J.-L."/>
            <person name="Karpfinger-Hartl L."/>
            <person name="Lanfranchi G."/>
            <person name="Lepingle A."/>
            <person name="Levesque H."/>
            <person name="Lyck R."/>
            <person name="Maftahi M."/>
            <person name="Mallet L."/>
            <person name="Maurer C.T.C."/>
            <person name="Messenguy F."/>
            <person name="Mewes H.-W."/>
            <person name="Moestl D."/>
            <person name="Nasr F."/>
            <person name="Nicaud J.-M."/>
            <person name="Niedenthal R.K."/>
            <person name="Pandolfo D."/>
            <person name="Pierard A."/>
            <person name="Piravandi E."/>
            <person name="Planta R.J."/>
            <person name="Pohl T.M."/>
            <person name="Purnelle B."/>
            <person name="Rebischung C."/>
            <person name="Remacha M.A."/>
            <person name="Revuelta J.L."/>
            <person name="Rinke M."/>
            <person name="Saiz J.E."/>
            <person name="Sartorello F."/>
            <person name="Scherens B."/>
            <person name="Sen-Gupta M."/>
            <person name="Soler-Mira A."/>
            <person name="Urbanus J.H.M."/>
            <person name="Valle G."/>
            <person name="Van Dyck L."/>
            <person name="Verhasselt P."/>
            <person name="Vierendeels F."/>
            <person name="Vissers S."/>
            <person name="Voet M."/>
            <person name="Volckaert G."/>
            <person name="Wach A."/>
            <person name="Wambutt R."/>
            <person name="Wedler H."/>
            <person name="Zollner A."/>
            <person name="Hani J."/>
        </authorList>
    </citation>
    <scope>NUCLEOTIDE SEQUENCE [LARGE SCALE GENOMIC DNA]</scope>
    <source>
        <strain>ATCC 204508 / S288c</strain>
    </source>
</reference>
<reference key="3">
    <citation type="journal article" date="2014" name="G3 (Bethesda)">
        <title>The reference genome sequence of Saccharomyces cerevisiae: Then and now.</title>
        <authorList>
            <person name="Engel S.R."/>
            <person name="Dietrich F.S."/>
            <person name="Fisk D.G."/>
            <person name="Binkley G."/>
            <person name="Balakrishnan R."/>
            <person name="Costanzo M.C."/>
            <person name="Dwight S.S."/>
            <person name="Hitz B.C."/>
            <person name="Karra K."/>
            <person name="Nash R.S."/>
            <person name="Weng S."/>
            <person name="Wong E.D."/>
            <person name="Lloyd P."/>
            <person name="Skrzypek M.S."/>
            <person name="Miyasato S.R."/>
            <person name="Simison M."/>
            <person name="Cherry J.M."/>
        </authorList>
    </citation>
    <scope>GENOME REANNOTATION</scope>
    <source>
        <strain>ATCC 204508 / S288c</strain>
    </source>
</reference>
<reference key="4">
    <citation type="journal article" date="1997" name="Yeast">
        <title>The DNA sequence of cosmid 14-13b from chromosome XIV of Saccharomyces cerevisiae reveals an unusually high number of overlapping open reading frames.</title>
        <authorList>
            <person name="de Antoni A."/>
            <person name="D'Angelo M."/>
            <person name="Dal Pero F."/>
            <person name="Sartorello F."/>
            <person name="Pandolfo D."/>
            <person name="Pallavicini A."/>
            <person name="Lanfranchi G."/>
            <person name="Valle G."/>
        </authorList>
    </citation>
    <scope>NUCLEOTIDE SEQUENCE [GENOMIC DNA] OF 26-953</scope>
</reference>
<reference key="5">
    <citation type="journal article" date="1996" name="Genetics">
        <title>Identification and characterization of FAR3, a gene required for pheromone-mediated G1 arrest in Saccharomyces cerevisiae.</title>
        <authorList>
            <person name="Horecka J."/>
            <person name="Sprague G.F. Jr."/>
        </authorList>
    </citation>
    <scope>FUNCTION</scope>
</reference>
<reference key="6">
    <citation type="journal article" date="2003" name="Mol. Cell. Biol.">
        <title>Far3 and five interacting proteins prevent premature recovery from pheromone arrest in the budding yeast Saccharomyces cerevisiae.</title>
        <authorList>
            <person name="Kemp H.A."/>
            <person name="Sprague G.F. Jr."/>
        </authorList>
    </citation>
    <scope>FUNCTION</scope>
    <scope>INTERACTION WITH FAR3; FAR7; FAR8; FAR10 AND VPS64</scope>
</reference>
<reference key="7">
    <citation type="journal article" date="2003" name="Nature">
        <title>Global analysis of protein expression in yeast.</title>
        <authorList>
            <person name="Ghaemmaghami S."/>
            <person name="Huh W.-K."/>
            <person name="Bower K."/>
            <person name="Howson R.W."/>
            <person name="Belle A."/>
            <person name="Dephoure N."/>
            <person name="O'Shea E.K."/>
            <person name="Weissman J.S."/>
        </authorList>
    </citation>
    <scope>LEVEL OF PROTEIN EXPRESSION [LARGE SCALE ANALYSIS]</scope>
</reference>
<reference key="8">
    <citation type="journal article" date="2005" name="Mol. Cell. Proteomics">
        <title>Quantitative phosphoproteomics applied to the yeast pheromone signaling pathway.</title>
        <authorList>
            <person name="Gruhler A."/>
            <person name="Olsen J.V."/>
            <person name="Mohammed S."/>
            <person name="Mortensen P."/>
            <person name="Faergeman N.J."/>
            <person name="Mann M."/>
            <person name="Jensen O.N."/>
        </authorList>
    </citation>
    <scope>PHOSPHORYLATION [LARGE SCALE ANALYSIS] AT SER-18</scope>
    <scope>IDENTIFICATION BY MASS SPECTROMETRY [LARGE SCALE ANALYSIS]</scope>
    <source>
        <strain>YAL6B</strain>
    </source>
</reference>
<reference key="9">
    <citation type="journal article" date="2007" name="J. Proteome Res.">
        <title>Large-scale phosphorylation analysis of alpha-factor-arrested Saccharomyces cerevisiae.</title>
        <authorList>
            <person name="Li X."/>
            <person name="Gerber S.A."/>
            <person name="Rudner A.D."/>
            <person name="Beausoleil S.A."/>
            <person name="Haas W."/>
            <person name="Villen J."/>
            <person name="Elias J.E."/>
            <person name="Gygi S.P."/>
        </authorList>
    </citation>
    <scope>PHOSPHORYLATION [LARGE SCALE ANALYSIS] AT SER-81 AND SER-524</scope>
    <scope>IDENTIFICATION BY MASS SPECTROMETRY [LARGE SCALE ANALYSIS]</scope>
    <source>
        <strain>ADR376</strain>
    </source>
</reference>
<reference key="10">
    <citation type="journal article" date="2008" name="Mol. Cell. Proteomics">
        <title>A multidimensional chromatography technology for in-depth phosphoproteome analysis.</title>
        <authorList>
            <person name="Albuquerque C.P."/>
            <person name="Smolka M.B."/>
            <person name="Payne S.H."/>
            <person name="Bafna V."/>
            <person name="Eng J."/>
            <person name="Zhou H."/>
        </authorList>
    </citation>
    <scope>PHOSPHORYLATION [LARGE SCALE ANALYSIS] AT SER-81</scope>
    <scope>IDENTIFICATION BY MASS SPECTROMETRY [LARGE SCALE ANALYSIS]</scope>
</reference>
<reference key="11">
    <citation type="journal article" date="2009" name="Science">
        <title>Global analysis of Cdk1 substrate phosphorylation sites provides insights into evolution.</title>
        <authorList>
            <person name="Holt L.J."/>
            <person name="Tuch B.B."/>
            <person name="Villen J."/>
            <person name="Johnson A.D."/>
            <person name="Gygi S.P."/>
            <person name="Morgan D.O."/>
        </authorList>
    </citation>
    <scope>PHOSPHORYLATION [LARGE SCALE ANALYSIS] AT SER-81; SER-527 AND SER-528</scope>
    <scope>IDENTIFICATION BY MASS SPECTROMETRY [LARGE SCALE ANALYSIS]</scope>
</reference>
<gene>
    <name type="primary">FAR11</name>
    <name type="ordered locus">YNL127W</name>
    <name type="ORF">N1221</name>
    <name type="ORF">N1875</name>
</gene>
<name>FAR11_YEAST</name>
<proteinExistence type="evidence at protein level"/>